<keyword id="KW-0963">Cytoplasm</keyword>
<keyword id="KW-0489">Methyltransferase</keyword>
<keyword id="KW-0949">S-adenosyl-L-methionine</keyword>
<keyword id="KW-0808">Transferase</keyword>
<keyword id="KW-0819">tRNA processing</keyword>
<reference key="1">
    <citation type="submission" date="2006-08" db="EMBL/GenBank/DDBJ databases">
        <title>Complete sequence of Shewanella sp. MR-4.</title>
        <authorList>
            <consortium name="US DOE Joint Genome Institute"/>
            <person name="Copeland A."/>
            <person name="Lucas S."/>
            <person name="Lapidus A."/>
            <person name="Barry K."/>
            <person name="Detter J.C."/>
            <person name="Glavina del Rio T."/>
            <person name="Hammon N."/>
            <person name="Israni S."/>
            <person name="Dalin E."/>
            <person name="Tice H."/>
            <person name="Pitluck S."/>
            <person name="Kiss H."/>
            <person name="Brettin T."/>
            <person name="Bruce D."/>
            <person name="Han C."/>
            <person name="Tapia R."/>
            <person name="Gilna P."/>
            <person name="Schmutz J."/>
            <person name="Larimer F."/>
            <person name="Land M."/>
            <person name="Hauser L."/>
            <person name="Kyrpides N."/>
            <person name="Mikhailova N."/>
            <person name="Nealson K."/>
            <person name="Konstantinidis K."/>
            <person name="Klappenbach J."/>
            <person name="Tiedje J."/>
            <person name="Richardson P."/>
        </authorList>
    </citation>
    <scope>NUCLEOTIDE SEQUENCE [LARGE SCALE GENOMIC DNA]</scope>
    <source>
        <strain>MR-4</strain>
    </source>
</reference>
<organism>
    <name type="scientific">Shewanella sp. (strain MR-4)</name>
    <dbReference type="NCBI Taxonomy" id="60480"/>
    <lineage>
        <taxon>Bacteria</taxon>
        <taxon>Pseudomonadati</taxon>
        <taxon>Pseudomonadota</taxon>
        <taxon>Gammaproteobacteria</taxon>
        <taxon>Alteromonadales</taxon>
        <taxon>Shewanellaceae</taxon>
        <taxon>Shewanella</taxon>
    </lineage>
</organism>
<name>TRMD_SHESM</name>
<feature type="chain" id="PRO_1000006520" description="tRNA (guanine-N(1)-)-methyltransferase">
    <location>
        <begin position="1"/>
        <end position="248"/>
    </location>
</feature>
<feature type="binding site" evidence="1">
    <location>
        <position position="113"/>
    </location>
    <ligand>
        <name>S-adenosyl-L-methionine</name>
        <dbReference type="ChEBI" id="CHEBI:59789"/>
    </ligand>
</feature>
<feature type="binding site" evidence="1">
    <location>
        <begin position="133"/>
        <end position="138"/>
    </location>
    <ligand>
        <name>S-adenosyl-L-methionine</name>
        <dbReference type="ChEBI" id="CHEBI:59789"/>
    </ligand>
</feature>
<proteinExistence type="inferred from homology"/>
<accession>Q0HGB0</accession>
<evidence type="ECO:0000255" key="1">
    <source>
        <dbReference type="HAMAP-Rule" id="MF_00605"/>
    </source>
</evidence>
<gene>
    <name evidence="1" type="primary">trmD</name>
    <name type="ordered locus">Shewmr4_2836</name>
</gene>
<dbReference type="EC" id="2.1.1.228" evidence="1"/>
<dbReference type="EMBL" id="CP000446">
    <property type="protein sequence ID" value="ABI39907.1"/>
    <property type="molecule type" value="Genomic_DNA"/>
</dbReference>
<dbReference type="RefSeq" id="WP_011623586.1">
    <property type="nucleotide sequence ID" value="NC_008321.1"/>
</dbReference>
<dbReference type="SMR" id="Q0HGB0"/>
<dbReference type="GeneID" id="75189673"/>
<dbReference type="KEGG" id="she:Shewmr4_2836"/>
<dbReference type="HOGENOM" id="CLU_047363_0_1_6"/>
<dbReference type="GO" id="GO:0005829">
    <property type="term" value="C:cytosol"/>
    <property type="evidence" value="ECO:0007669"/>
    <property type="project" value="TreeGrafter"/>
</dbReference>
<dbReference type="GO" id="GO:0052906">
    <property type="term" value="F:tRNA (guanine(37)-N1)-methyltransferase activity"/>
    <property type="evidence" value="ECO:0007669"/>
    <property type="project" value="UniProtKB-UniRule"/>
</dbReference>
<dbReference type="GO" id="GO:0002939">
    <property type="term" value="P:tRNA N1-guanine methylation"/>
    <property type="evidence" value="ECO:0007669"/>
    <property type="project" value="TreeGrafter"/>
</dbReference>
<dbReference type="CDD" id="cd18080">
    <property type="entry name" value="TrmD-like"/>
    <property type="match status" value="1"/>
</dbReference>
<dbReference type="FunFam" id="1.10.1270.20:FF:000001">
    <property type="entry name" value="tRNA (guanine-N(1)-)-methyltransferase"/>
    <property type="match status" value="1"/>
</dbReference>
<dbReference type="FunFam" id="3.40.1280.10:FF:000001">
    <property type="entry name" value="tRNA (guanine-N(1)-)-methyltransferase"/>
    <property type="match status" value="1"/>
</dbReference>
<dbReference type="Gene3D" id="3.40.1280.10">
    <property type="match status" value="1"/>
</dbReference>
<dbReference type="Gene3D" id="1.10.1270.20">
    <property type="entry name" value="tRNA(m1g37)methyltransferase, domain 2"/>
    <property type="match status" value="1"/>
</dbReference>
<dbReference type="HAMAP" id="MF_00605">
    <property type="entry name" value="TrmD"/>
    <property type="match status" value="1"/>
</dbReference>
<dbReference type="InterPro" id="IPR029028">
    <property type="entry name" value="Alpha/beta_knot_MTases"/>
</dbReference>
<dbReference type="InterPro" id="IPR023148">
    <property type="entry name" value="tRNA_m1G_MeTrfase_C_sf"/>
</dbReference>
<dbReference type="InterPro" id="IPR002649">
    <property type="entry name" value="tRNA_m1G_MeTrfase_TrmD"/>
</dbReference>
<dbReference type="InterPro" id="IPR029026">
    <property type="entry name" value="tRNA_m1G_MTases_N"/>
</dbReference>
<dbReference type="InterPro" id="IPR016009">
    <property type="entry name" value="tRNA_MeTrfase_TRMD/TRM10"/>
</dbReference>
<dbReference type="NCBIfam" id="NF000648">
    <property type="entry name" value="PRK00026.1"/>
    <property type="match status" value="1"/>
</dbReference>
<dbReference type="NCBIfam" id="TIGR00088">
    <property type="entry name" value="trmD"/>
    <property type="match status" value="1"/>
</dbReference>
<dbReference type="PANTHER" id="PTHR46417">
    <property type="entry name" value="TRNA (GUANINE-N(1)-)-METHYLTRANSFERASE"/>
    <property type="match status" value="1"/>
</dbReference>
<dbReference type="PANTHER" id="PTHR46417:SF1">
    <property type="entry name" value="TRNA (GUANINE-N(1)-)-METHYLTRANSFERASE"/>
    <property type="match status" value="1"/>
</dbReference>
<dbReference type="Pfam" id="PF01746">
    <property type="entry name" value="tRNA_m1G_MT"/>
    <property type="match status" value="1"/>
</dbReference>
<dbReference type="PIRSF" id="PIRSF000386">
    <property type="entry name" value="tRNA_mtase"/>
    <property type="match status" value="1"/>
</dbReference>
<dbReference type="SUPFAM" id="SSF75217">
    <property type="entry name" value="alpha/beta knot"/>
    <property type="match status" value="1"/>
</dbReference>
<sequence length="248" mass="27489">MWLGVITLFPEMFRAVTDFGVTGRAVKNGLLELHTWNPRDFTHDRHSTVDDRPYGGGPGMLMMVQPLRDAIHAAKAAAGEEAKVIYLSPQGRKLDQQGVTELAESSRLILVCGRYEGIDERIIQTEVDEEWSVGDYVLSGGELPAMTLIDAVSRLVPGVLGKQASAEQDSFSDGLLDCPHYTRPESLDGLDVPAVLLSGNHEQIRLWRLQQSLGRTFLRRPELFENLALTDEQSTLLAQFVEAMDKNA</sequence>
<comment type="function">
    <text evidence="1">Specifically methylates guanosine-37 in various tRNAs.</text>
</comment>
<comment type="catalytic activity">
    <reaction evidence="1">
        <text>guanosine(37) in tRNA + S-adenosyl-L-methionine = N(1)-methylguanosine(37) in tRNA + S-adenosyl-L-homocysteine + H(+)</text>
        <dbReference type="Rhea" id="RHEA:36899"/>
        <dbReference type="Rhea" id="RHEA-COMP:10145"/>
        <dbReference type="Rhea" id="RHEA-COMP:10147"/>
        <dbReference type="ChEBI" id="CHEBI:15378"/>
        <dbReference type="ChEBI" id="CHEBI:57856"/>
        <dbReference type="ChEBI" id="CHEBI:59789"/>
        <dbReference type="ChEBI" id="CHEBI:73542"/>
        <dbReference type="ChEBI" id="CHEBI:74269"/>
        <dbReference type="EC" id="2.1.1.228"/>
    </reaction>
</comment>
<comment type="subunit">
    <text evidence="1">Homodimer.</text>
</comment>
<comment type="subcellular location">
    <subcellularLocation>
        <location evidence="1">Cytoplasm</location>
    </subcellularLocation>
</comment>
<comment type="similarity">
    <text evidence="1">Belongs to the RNA methyltransferase TrmD family.</text>
</comment>
<protein>
    <recommendedName>
        <fullName evidence="1">tRNA (guanine-N(1)-)-methyltransferase</fullName>
        <ecNumber evidence="1">2.1.1.228</ecNumber>
    </recommendedName>
    <alternativeName>
        <fullName evidence="1">M1G-methyltransferase</fullName>
    </alternativeName>
    <alternativeName>
        <fullName evidence="1">tRNA [GM37] methyltransferase</fullName>
    </alternativeName>
</protein>